<sequence length="478" mass="53449">MHPNVYIPDAFLEKIQTILPANLNMEDFISACQRPLRKSIRVNTLKMSVEDFVKRAEDKGWTLSPVPWCDNGFWIEADESVVPLGNTAEHMSGLFYIQEASSMMPVSALFMNDESYDAVLDTAAAPGSKTTQIAALMKNEGVLVANEYAASRVKVLHANIERCGVRNAALSNFDGRVFGGWLPEQFDAVLLDAPCSGEGTVRKDEDAMKNWTQASVLEIADTQKDLIESAFHALKPGGVLVYSTCTLSTEENQQVCHHLKETFGDAVEFESLDGLFENANAALTEEGFLHIFPQVYDCEGFFVARIRKHHSVEAPQVKKRMGKFPFVKASKKESEEISKQLHNALDIELPSESTVWLRDKDVWLFPDALEPMIGELRFSRMGIKIAEAHKNGYRWQHQVATALATGAESNAIELTIEEAREWYMGRDVRPQIIPEGLKTGKGEVLVKYQGAIIGLGKWVSNRIKNGLPRELVRDKNLF</sequence>
<feature type="chain" id="PRO_0000285024" description="Ribosomal RNA small subunit methyltransferase F">
    <location>
        <begin position="1"/>
        <end position="478"/>
    </location>
</feature>
<feature type="active site" description="Nucleophile" evidence="1">
    <location>
        <position position="245"/>
    </location>
</feature>
<feature type="binding site" evidence="1">
    <location>
        <begin position="123"/>
        <end position="129"/>
    </location>
    <ligand>
        <name>S-adenosyl-L-methionine</name>
        <dbReference type="ChEBI" id="CHEBI:59789"/>
    </ligand>
</feature>
<feature type="binding site" evidence="1">
    <location>
        <position position="147"/>
    </location>
    <ligand>
        <name>S-adenosyl-L-methionine</name>
        <dbReference type="ChEBI" id="CHEBI:59789"/>
    </ligand>
</feature>
<feature type="binding site" evidence="1">
    <location>
        <position position="174"/>
    </location>
    <ligand>
        <name>S-adenosyl-L-methionine</name>
        <dbReference type="ChEBI" id="CHEBI:59789"/>
    </ligand>
</feature>
<feature type="binding site" evidence="1">
    <location>
        <position position="192"/>
    </location>
    <ligand>
        <name>S-adenosyl-L-methionine</name>
        <dbReference type="ChEBI" id="CHEBI:59789"/>
    </ligand>
</feature>
<accession>Q87PA5</accession>
<evidence type="ECO:0000255" key="1">
    <source>
        <dbReference type="HAMAP-Rule" id="MF_01579"/>
    </source>
</evidence>
<dbReference type="EC" id="2.1.1.178" evidence="1"/>
<dbReference type="EMBL" id="BA000031">
    <property type="protein sequence ID" value="BAC59875.1"/>
    <property type="molecule type" value="Genomic_DNA"/>
</dbReference>
<dbReference type="RefSeq" id="NP_797991.1">
    <property type="nucleotide sequence ID" value="NC_004603.1"/>
</dbReference>
<dbReference type="RefSeq" id="WP_005457106.1">
    <property type="nucleotide sequence ID" value="NC_004603.1"/>
</dbReference>
<dbReference type="SMR" id="Q87PA5"/>
<dbReference type="GeneID" id="1189119"/>
<dbReference type="KEGG" id="vpa:VP1612"/>
<dbReference type="PATRIC" id="fig|223926.6.peg.1535"/>
<dbReference type="eggNOG" id="COG0144">
    <property type="taxonomic scope" value="Bacteria"/>
</dbReference>
<dbReference type="eggNOG" id="COG3270">
    <property type="taxonomic scope" value="Bacteria"/>
</dbReference>
<dbReference type="HOGENOM" id="CLU_005316_6_2_6"/>
<dbReference type="Proteomes" id="UP000002493">
    <property type="component" value="Chromosome 1"/>
</dbReference>
<dbReference type="GO" id="GO:0005737">
    <property type="term" value="C:cytoplasm"/>
    <property type="evidence" value="ECO:0007669"/>
    <property type="project" value="UniProtKB-SubCell"/>
</dbReference>
<dbReference type="GO" id="GO:0003723">
    <property type="term" value="F:RNA binding"/>
    <property type="evidence" value="ECO:0007669"/>
    <property type="project" value="UniProtKB-KW"/>
</dbReference>
<dbReference type="GO" id="GO:0009383">
    <property type="term" value="F:rRNA (cytosine-C5-)-methyltransferase activity"/>
    <property type="evidence" value="ECO:0007669"/>
    <property type="project" value="TreeGrafter"/>
</dbReference>
<dbReference type="GO" id="GO:0070475">
    <property type="term" value="P:rRNA base methylation"/>
    <property type="evidence" value="ECO:0007669"/>
    <property type="project" value="TreeGrafter"/>
</dbReference>
<dbReference type="CDD" id="cd02440">
    <property type="entry name" value="AdoMet_MTases"/>
    <property type="match status" value="1"/>
</dbReference>
<dbReference type="Gene3D" id="3.10.450.720">
    <property type="match status" value="1"/>
</dbReference>
<dbReference type="Gene3D" id="3.40.50.150">
    <property type="entry name" value="Vaccinia Virus protein VP39"/>
    <property type="match status" value="1"/>
</dbReference>
<dbReference type="HAMAP" id="MF_01579">
    <property type="entry name" value="16SrRNA_methyltr_F"/>
    <property type="match status" value="1"/>
</dbReference>
<dbReference type="InterPro" id="IPR031341">
    <property type="entry name" value="Methyltr_RsmF_N"/>
</dbReference>
<dbReference type="InterPro" id="IPR049560">
    <property type="entry name" value="MeTrfase_RsmB-F_NOP2_cat"/>
</dbReference>
<dbReference type="InterPro" id="IPR001678">
    <property type="entry name" value="MeTrfase_RsmB-F_NOP2_dom"/>
</dbReference>
<dbReference type="InterPro" id="IPR027391">
    <property type="entry name" value="Nol1_Nop2_Fmu_2"/>
</dbReference>
<dbReference type="InterPro" id="IPR011023">
    <property type="entry name" value="Nop2p"/>
</dbReference>
<dbReference type="InterPro" id="IPR023267">
    <property type="entry name" value="RCMT"/>
</dbReference>
<dbReference type="InterPro" id="IPR023545">
    <property type="entry name" value="rRNA_ssu_MeTfrase_F"/>
</dbReference>
<dbReference type="InterPro" id="IPR018314">
    <property type="entry name" value="RsmB/NOL1/NOP2-like_CS"/>
</dbReference>
<dbReference type="InterPro" id="IPR029063">
    <property type="entry name" value="SAM-dependent_MTases_sf"/>
</dbReference>
<dbReference type="InterPro" id="IPR048457">
    <property type="entry name" value="YebU_pre-PUA_dom"/>
</dbReference>
<dbReference type="NCBIfam" id="TIGR00446">
    <property type="entry name" value="nop2p"/>
    <property type="match status" value="1"/>
</dbReference>
<dbReference type="NCBIfam" id="NF008898">
    <property type="entry name" value="PRK11933.1"/>
    <property type="match status" value="1"/>
</dbReference>
<dbReference type="PANTHER" id="PTHR22807:SF30">
    <property type="entry name" value="28S RRNA (CYTOSINE(4447)-C(5))-METHYLTRANSFERASE-RELATED"/>
    <property type="match status" value="1"/>
</dbReference>
<dbReference type="PANTHER" id="PTHR22807">
    <property type="entry name" value="NOP2 YEAST -RELATED NOL1/NOP2/FMU SUN DOMAIN-CONTAINING"/>
    <property type="match status" value="1"/>
</dbReference>
<dbReference type="Pfam" id="PF01189">
    <property type="entry name" value="Methyltr_RsmB-F"/>
    <property type="match status" value="1"/>
</dbReference>
<dbReference type="Pfam" id="PF17125">
    <property type="entry name" value="Methyltr_RsmF_N"/>
    <property type="match status" value="1"/>
</dbReference>
<dbReference type="Pfam" id="PF13636">
    <property type="entry name" value="Methyltranf_PUA"/>
    <property type="match status" value="1"/>
</dbReference>
<dbReference type="Pfam" id="PF21150">
    <property type="entry name" value="YebU_pre-PUA_dom"/>
    <property type="match status" value="1"/>
</dbReference>
<dbReference type="PRINTS" id="PR02008">
    <property type="entry name" value="RCMTFAMILY"/>
</dbReference>
<dbReference type="SUPFAM" id="SSF53335">
    <property type="entry name" value="S-adenosyl-L-methionine-dependent methyltransferases"/>
    <property type="match status" value="1"/>
</dbReference>
<dbReference type="PROSITE" id="PS01153">
    <property type="entry name" value="NOL1_NOP2_SUN"/>
    <property type="match status" value="1"/>
</dbReference>
<dbReference type="PROSITE" id="PS51686">
    <property type="entry name" value="SAM_MT_RSMB_NOP"/>
    <property type="match status" value="1"/>
</dbReference>
<protein>
    <recommendedName>
        <fullName evidence="1">Ribosomal RNA small subunit methyltransferase F</fullName>
        <ecNumber evidence="1">2.1.1.178</ecNumber>
    </recommendedName>
    <alternativeName>
        <fullName evidence="1">16S rRNA m5C1407 methyltransferase</fullName>
    </alternativeName>
    <alternativeName>
        <fullName evidence="1">rRNA (cytosine-C(5)-)-methyltransferase RsmF</fullName>
    </alternativeName>
</protein>
<proteinExistence type="inferred from homology"/>
<reference key="1">
    <citation type="journal article" date="2003" name="Lancet">
        <title>Genome sequence of Vibrio parahaemolyticus: a pathogenic mechanism distinct from that of V. cholerae.</title>
        <authorList>
            <person name="Makino K."/>
            <person name="Oshima K."/>
            <person name="Kurokawa K."/>
            <person name="Yokoyama K."/>
            <person name="Uda T."/>
            <person name="Tagomori K."/>
            <person name="Iijima Y."/>
            <person name="Najima M."/>
            <person name="Nakano M."/>
            <person name="Yamashita A."/>
            <person name="Kubota Y."/>
            <person name="Kimura S."/>
            <person name="Yasunaga T."/>
            <person name="Honda T."/>
            <person name="Shinagawa H."/>
            <person name="Hattori M."/>
            <person name="Iida T."/>
        </authorList>
    </citation>
    <scope>NUCLEOTIDE SEQUENCE [LARGE SCALE GENOMIC DNA]</scope>
    <source>
        <strain>RIMD 2210633</strain>
    </source>
</reference>
<name>RSMF_VIBPA</name>
<comment type="function">
    <text evidence="1">Specifically methylates the cytosine at position 1407 (m5C1407) of 16S rRNA.</text>
</comment>
<comment type="catalytic activity">
    <reaction evidence="1">
        <text>cytidine(1407) in 16S rRNA + S-adenosyl-L-methionine = 5-methylcytidine(1407) in 16S rRNA + S-adenosyl-L-homocysteine + H(+)</text>
        <dbReference type="Rhea" id="RHEA:42756"/>
        <dbReference type="Rhea" id="RHEA-COMP:10223"/>
        <dbReference type="Rhea" id="RHEA-COMP:10224"/>
        <dbReference type="ChEBI" id="CHEBI:15378"/>
        <dbReference type="ChEBI" id="CHEBI:57856"/>
        <dbReference type="ChEBI" id="CHEBI:59789"/>
        <dbReference type="ChEBI" id="CHEBI:74483"/>
        <dbReference type="ChEBI" id="CHEBI:82748"/>
        <dbReference type="EC" id="2.1.1.178"/>
    </reaction>
</comment>
<comment type="subcellular location">
    <subcellularLocation>
        <location evidence="1">Cytoplasm</location>
    </subcellularLocation>
</comment>
<comment type="similarity">
    <text evidence="1">Belongs to the class I-like SAM-binding methyltransferase superfamily. RsmB/NOP family.</text>
</comment>
<keyword id="KW-0963">Cytoplasm</keyword>
<keyword id="KW-0489">Methyltransferase</keyword>
<keyword id="KW-0694">RNA-binding</keyword>
<keyword id="KW-0698">rRNA processing</keyword>
<keyword id="KW-0949">S-adenosyl-L-methionine</keyword>
<keyword id="KW-0808">Transferase</keyword>
<organism>
    <name type="scientific">Vibrio parahaemolyticus serotype O3:K6 (strain RIMD 2210633)</name>
    <dbReference type="NCBI Taxonomy" id="223926"/>
    <lineage>
        <taxon>Bacteria</taxon>
        <taxon>Pseudomonadati</taxon>
        <taxon>Pseudomonadota</taxon>
        <taxon>Gammaproteobacteria</taxon>
        <taxon>Vibrionales</taxon>
        <taxon>Vibrionaceae</taxon>
        <taxon>Vibrio</taxon>
    </lineage>
</organism>
<gene>
    <name evidence="1" type="primary">rsmF</name>
    <name type="ordered locus">VP1612</name>
</gene>